<keyword id="KW-0903">Direct protein sequencing</keyword>
<keyword id="KW-1015">Disulfide bond</keyword>
<keyword id="KW-0959">Myotoxin</keyword>
<keyword id="KW-0964">Secreted</keyword>
<keyword id="KW-0800">Toxin</keyword>
<protein>
    <recommendedName>
        <fullName evidence="3">Basic phospholipase A2 homolog Bneu-I</fullName>
        <shortName>svPLA2 homolog</shortName>
    </recommendedName>
    <alternativeName>
        <fullName evidence="3">B.neuwiedii myotoxin I</fullName>
    </alternativeName>
    <alternativeName>
        <fullName>Lys49 PLA2-like</fullName>
    </alternativeName>
</protein>
<reference key="1">
    <citation type="journal article" date="1999" name="Toxicon">
        <title>Characterization of a basic phospholipase A2-homologeu myotoxin isolated from the venom of the snake Bothrops neuwiedii (yarara chica) from Argentina.</title>
        <authorList>
            <person name="Geoghegan P."/>
            <person name="Angulo Y."/>
            <person name="Cangelosi A."/>
            <person name="Diaz M."/>
            <person name="Lomonte B."/>
        </authorList>
    </citation>
    <scope>PROTEIN SEQUENCE</scope>
    <scope>FUNCTION</scope>
    <scope>SUBCELLULAR LOCATION</scope>
</reference>
<reference key="2">
    <citation type="journal article" date="2018" name="Toxicon">
        <title>Local and systemic effects of BdipTX-I, a Lys-49 phospholipase A2 isolated from Bothrops diporus snake venom.</title>
        <authorList>
            <person name="Teixera L.F."/>
            <person name="de Carvalho L.H."/>
            <person name="de Castro O.B."/>
            <person name="Bastos J.S.F."/>
            <person name="Nery N.M."/>
            <person name="Oliveira G.A."/>
            <person name="Kayano A.M."/>
            <person name="Soares A.M."/>
            <person name="Zuliani J.P."/>
        </authorList>
    </citation>
    <scope>TAXONOMY REVISION</scope>
    <source>
        <tissue>Venom</tissue>
    </source>
</reference>
<proteinExistence type="evidence at protein level"/>
<dbReference type="SMR" id="P0DUP1"/>
<dbReference type="GO" id="GO:0005576">
    <property type="term" value="C:extracellular region"/>
    <property type="evidence" value="ECO:0007669"/>
    <property type="project" value="UniProtKB-SubCell"/>
</dbReference>
<dbReference type="GO" id="GO:0005509">
    <property type="term" value="F:calcium ion binding"/>
    <property type="evidence" value="ECO:0007669"/>
    <property type="project" value="InterPro"/>
</dbReference>
<dbReference type="GO" id="GO:0004623">
    <property type="term" value="F:phospholipase A2 activity"/>
    <property type="evidence" value="ECO:0007669"/>
    <property type="project" value="InterPro"/>
</dbReference>
<dbReference type="GO" id="GO:0090729">
    <property type="term" value="F:toxin activity"/>
    <property type="evidence" value="ECO:0007669"/>
    <property type="project" value="UniProtKB-KW"/>
</dbReference>
<dbReference type="GO" id="GO:0050482">
    <property type="term" value="P:arachidonate secretion"/>
    <property type="evidence" value="ECO:0007669"/>
    <property type="project" value="InterPro"/>
</dbReference>
<dbReference type="GO" id="GO:0016042">
    <property type="term" value="P:lipid catabolic process"/>
    <property type="evidence" value="ECO:0007669"/>
    <property type="project" value="InterPro"/>
</dbReference>
<dbReference type="GO" id="GO:0006644">
    <property type="term" value="P:phospholipid metabolic process"/>
    <property type="evidence" value="ECO:0007669"/>
    <property type="project" value="InterPro"/>
</dbReference>
<dbReference type="Gene3D" id="1.20.90.10">
    <property type="entry name" value="Phospholipase A2 domain"/>
    <property type="match status" value="1"/>
</dbReference>
<dbReference type="InterPro" id="IPR001211">
    <property type="entry name" value="PLipase_A2"/>
</dbReference>
<dbReference type="InterPro" id="IPR016090">
    <property type="entry name" value="PLipase_A2_dom"/>
</dbReference>
<dbReference type="InterPro" id="IPR036444">
    <property type="entry name" value="PLipase_A2_dom_sf"/>
</dbReference>
<dbReference type="Pfam" id="PF00068">
    <property type="entry name" value="Phospholip_A2_1"/>
    <property type="match status" value="1"/>
</dbReference>
<dbReference type="PRINTS" id="PR00389">
    <property type="entry name" value="PHPHLIPASEA2"/>
</dbReference>
<dbReference type="SUPFAM" id="SSF48619">
    <property type="entry name" value="Phospholipase A2, PLA2"/>
    <property type="match status" value="1"/>
</dbReference>
<comment type="function">
    <text evidence="2">Snake venom phospholipase A2 homolog that lacks enzymatic activity (PubMed:10519651). It induces local myotoxicity and shows edema-forming effects in mice (PubMed:10519651). It is not lethal when intravenously injected at high doses (up to 4.7 mg/kg) (PubMed:10519651).</text>
</comment>
<comment type="subunit">
    <text evidence="2">Homodimer; probably non-covalently linked.</text>
</comment>
<comment type="subcellular location">
    <subcellularLocation>
        <location evidence="2">Secreted</location>
    </subcellularLocation>
</comment>
<comment type="tissue specificity">
    <text evidence="5">Expressed by the venom gland.</text>
</comment>
<comment type="similarity">
    <text evidence="4">Belongs to the phospholipase A2 family. Group II subfamily. K49 sub-subfamily.</text>
</comment>
<comment type="caution">
    <text evidence="4">Does not bind calcium as one of the calcium-binding sites is lost (Asp-&gt;Lys which corresponds to 'Lys-49' in the current nomenclature).</text>
</comment>
<comment type="caution">
    <text evidence="6">The source organism was originally classified as the Bothrops neuwiedi species.</text>
</comment>
<accession>P0DUP1</accession>
<evidence type="ECO:0000250" key="1">
    <source>
        <dbReference type="UniProtKB" id="I6L8L6"/>
    </source>
</evidence>
<evidence type="ECO:0000269" key="2">
    <source>
    </source>
</evidence>
<evidence type="ECO:0000303" key="3">
    <source>
    </source>
</evidence>
<evidence type="ECO:0000305" key="4"/>
<evidence type="ECO:0000305" key="5">
    <source>
    </source>
</evidence>
<evidence type="ECO:0000305" key="6">
    <source>
    </source>
</evidence>
<feature type="chain" id="PRO_0000452902" description="Basic phospholipase A2 homolog Bneu-I" evidence="2">
    <location>
        <begin position="1"/>
        <end position="40" status="greater than"/>
    </location>
</feature>
<feature type="disulfide bond" evidence="1">
    <location>
        <begin position="26"/>
        <end status="unknown"/>
    </location>
</feature>
<feature type="disulfide bond" evidence="1">
    <location>
        <begin position="28"/>
        <end status="unknown"/>
    </location>
</feature>
<feature type="non-terminal residue" evidence="5">
    <location>
        <position position="40"/>
    </location>
</feature>
<organism>
    <name type="scientific">Bothrops diporus</name>
    <name type="common">Chaco lancehead</name>
    <name type="synonym">Bothrops neuwiedi diporus</name>
    <dbReference type="NCBI Taxonomy" id="1107943"/>
    <lineage>
        <taxon>Eukaryota</taxon>
        <taxon>Metazoa</taxon>
        <taxon>Chordata</taxon>
        <taxon>Craniata</taxon>
        <taxon>Vertebrata</taxon>
        <taxon>Euteleostomi</taxon>
        <taxon>Lepidosauria</taxon>
        <taxon>Squamata</taxon>
        <taxon>Bifurcata</taxon>
        <taxon>Unidentata</taxon>
        <taxon>Episquamata</taxon>
        <taxon>Toxicofera</taxon>
        <taxon>Serpentes</taxon>
        <taxon>Colubroidea</taxon>
        <taxon>Viperidae</taxon>
        <taxon>Crotalinae</taxon>
        <taxon>Bothrops</taxon>
    </lineage>
</organism>
<sequence>SLVELGKMILQETGKNPVTSYGAYGCNCGVLGRGKPKDAT</sequence>
<name>PA2H_BOTDP</name>